<dbReference type="EMBL" id="AF528871">
    <property type="protein sequence ID" value="AAQ09283.1"/>
    <property type="molecule type" value="Genomic_DNA"/>
</dbReference>
<dbReference type="RefSeq" id="YP_008082148.1">
    <property type="nucleotide sequence ID" value="NC_021437.1"/>
</dbReference>
<dbReference type="SMR" id="Q6EYU0"/>
<dbReference type="GeneID" id="15824169"/>
<dbReference type="GO" id="GO:0009535">
    <property type="term" value="C:chloroplast thylakoid membrane"/>
    <property type="evidence" value="ECO:0007669"/>
    <property type="project" value="UniProtKB-SubCell"/>
</dbReference>
<dbReference type="GO" id="GO:0009539">
    <property type="term" value="C:photosystem II reaction center"/>
    <property type="evidence" value="ECO:0007669"/>
    <property type="project" value="InterPro"/>
</dbReference>
<dbReference type="GO" id="GO:0009055">
    <property type="term" value="F:electron transfer activity"/>
    <property type="evidence" value="ECO:0007669"/>
    <property type="project" value="UniProtKB-UniRule"/>
</dbReference>
<dbReference type="GO" id="GO:0020037">
    <property type="term" value="F:heme binding"/>
    <property type="evidence" value="ECO:0007669"/>
    <property type="project" value="InterPro"/>
</dbReference>
<dbReference type="GO" id="GO:0005506">
    <property type="term" value="F:iron ion binding"/>
    <property type="evidence" value="ECO:0007669"/>
    <property type="project" value="UniProtKB-UniRule"/>
</dbReference>
<dbReference type="GO" id="GO:0009767">
    <property type="term" value="P:photosynthetic electron transport chain"/>
    <property type="evidence" value="ECO:0007669"/>
    <property type="project" value="InterPro"/>
</dbReference>
<dbReference type="HAMAP" id="MF_00643">
    <property type="entry name" value="PSII_PsbF"/>
    <property type="match status" value="1"/>
</dbReference>
<dbReference type="InterPro" id="IPR006241">
    <property type="entry name" value="PSII_cyt_b559_bsu"/>
</dbReference>
<dbReference type="InterPro" id="IPR006216">
    <property type="entry name" value="PSII_cyt_b559_CS"/>
</dbReference>
<dbReference type="InterPro" id="IPR013081">
    <property type="entry name" value="PSII_cyt_b559_N"/>
</dbReference>
<dbReference type="NCBIfam" id="TIGR01333">
    <property type="entry name" value="cyt_b559_beta"/>
    <property type="match status" value="1"/>
</dbReference>
<dbReference type="Pfam" id="PF00283">
    <property type="entry name" value="Cytochrom_B559"/>
    <property type="match status" value="1"/>
</dbReference>
<dbReference type="PIRSF" id="PIRSF000037">
    <property type="entry name" value="PsbF"/>
    <property type="match status" value="1"/>
</dbReference>
<dbReference type="SUPFAM" id="SSF161045">
    <property type="entry name" value="Cytochrome b559 subunits"/>
    <property type="match status" value="1"/>
</dbReference>
<dbReference type="PROSITE" id="PS00537">
    <property type="entry name" value="CYTOCHROME_B559"/>
    <property type="match status" value="1"/>
</dbReference>
<gene>
    <name evidence="1" type="primary">psbF</name>
</gene>
<evidence type="ECO:0000255" key="1">
    <source>
        <dbReference type="HAMAP-Rule" id="MF_00643"/>
    </source>
</evidence>
<feature type="chain" id="PRO_0000200379" description="Cytochrome b559 subunit beta">
    <location>
        <begin position="1"/>
        <end position="39"/>
    </location>
</feature>
<feature type="transmembrane region" description="Helical" evidence="1">
    <location>
        <begin position="14"/>
        <end position="30"/>
    </location>
</feature>
<feature type="binding site" description="axial binding residue" evidence="1">
    <location>
        <position position="18"/>
    </location>
    <ligand>
        <name>heme</name>
        <dbReference type="ChEBI" id="CHEBI:30413"/>
        <note>ligand shared with alpha subunit</note>
    </ligand>
    <ligandPart>
        <name>Fe</name>
        <dbReference type="ChEBI" id="CHEBI:18248"/>
    </ligandPart>
</feature>
<keyword id="KW-0150">Chloroplast</keyword>
<keyword id="KW-0249">Electron transport</keyword>
<keyword id="KW-0349">Heme</keyword>
<keyword id="KW-0408">Iron</keyword>
<keyword id="KW-0472">Membrane</keyword>
<keyword id="KW-0479">Metal-binding</keyword>
<keyword id="KW-0602">Photosynthesis</keyword>
<keyword id="KW-0604">Photosystem II</keyword>
<keyword id="KW-0934">Plastid</keyword>
<keyword id="KW-0793">Thylakoid</keyword>
<keyword id="KW-0812">Transmembrane</keyword>
<keyword id="KW-1133">Transmembrane helix</keyword>
<keyword id="KW-0813">Transport</keyword>
<name>PSBF_CUNLA</name>
<geneLocation type="chloroplast"/>
<protein>
    <recommendedName>
        <fullName evidence="1">Cytochrome b559 subunit beta</fullName>
    </recommendedName>
    <alternativeName>
        <fullName evidence="1">PSII reaction center subunit VI</fullName>
    </alternativeName>
</protein>
<accession>Q6EYU0</accession>
<organism>
    <name type="scientific">Cunninghamia lanceolata</name>
    <name type="common">China fir</name>
    <name type="synonym">Pinus lanceolata</name>
    <dbReference type="NCBI Taxonomy" id="28977"/>
    <lineage>
        <taxon>Eukaryota</taxon>
        <taxon>Viridiplantae</taxon>
        <taxon>Streptophyta</taxon>
        <taxon>Embryophyta</taxon>
        <taxon>Tracheophyta</taxon>
        <taxon>Spermatophyta</taxon>
        <taxon>Pinopsida</taxon>
        <taxon>Pinidae</taxon>
        <taxon>Conifers II</taxon>
        <taxon>Cupressales</taxon>
        <taxon>Cupressaceae</taxon>
        <taxon>Cunninghamia</taxon>
    </lineage>
</organism>
<sequence length="39" mass="4484">MTIDRTYPIFTVRWLAVHGLAVPTVFFLGSISAMQFIQR</sequence>
<reference key="1">
    <citation type="submission" date="2002-07" db="EMBL/GenBank/DDBJ databases">
        <title>Parsing out signal and noise for seed-plant phylogenetic inference.</title>
        <authorList>
            <person name="Graham S.W."/>
            <person name="Rai H.S."/>
            <person name="Ikegami K."/>
            <person name="Reeves P.A."/>
            <person name="Olmstead R.G."/>
        </authorList>
    </citation>
    <scope>NUCLEOTIDE SEQUENCE [GENOMIC DNA]</scope>
</reference>
<proteinExistence type="inferred from homology"/>
<comment type="function">
    <text evidence="1">This b-type cytochrome is tightly associated with the reaction center of photosystem II (PSII). PSII is a light-driven water:plastoquinone oxidoreductase that uses light energy to abstract electrons from H(2)O, generating O(2) and a proton gradient subsequently used for ATP formation. It consists of a core antenna complex that captures photons, and an electron transfer chain that converts photonic excitation into a charge separation.</text>
</comment>
<comment type="cofactor">
    <cofactor evidence="1">
        <name>heme b</name>
        <dbReference type="ChEBI" id="CHEBI:60344"/>
    </cofactor>
    <text evidence="1">With its partner (PsbE) binds heme. PSII binds additional chlorophylls, carotenoids and specific lipids.</text>
</comment>
<comment type="subunit">
    <text evidence="1">Heterodimer of an alpha subunit and a beta subunit. PSII is composed of 1 copy each of membrane proteins PsbA, PsbB, PsbC, PsbD, PsbE, PsbF, PsbH, PsbI, PsbJ, PsbK, PsbL, PsbM, PsbT, PsbX, PsbY, PsbZ, Psb30/Ycf12, at least 3 peripheral proteins of the oxygen-evolving complex and a large number of cofactors. It forms dimeric complexes.</text>
</comment>
<comment type="subcellular location">
    <subcellularLocation>
        <location evidence="1">Plastid</location>
        <location evidence="1">Chloroplast thylakoid membrane</location>
        <topology evidence="1">Single-pass membrane protein</topology>
    </subcellularLocation>
</comment>
<comment type="similarity">
    <text evidence="1">Belongs to the PsbE/PsbF family.</text>
</comment>